<comment type="function">
    <text evidence="1">Involved in nucleotide metabolism: produces dUMP, the immediate precursor of thymidine nucleotides and decreases the intracellular concentration of dUTP to avoid uracil incorporation into viral DNA.</text>
</comment>
<comment type="catalytic activity">
    <reaction evidence="1">
        <text>dUTP + H2O = dUMP + diphosphate + H(+)</text>
        <dbReference type="Rhea" id="RHEA:10248"/>
        <dbReference type="ChEBI" id="CHEBI:15377"/>
        <dbReference type="ChEBI" id="CHEBI:15378"/>
        <dbReference type="ChEBI" id="CHEBI:33019"/>
        <dbReference type="ChEBI" id="CHEBI:61555"/>
        <dbReference type="ChEBI" id="CHEBI:246422"/>
        <dbReference type="EC" id="3.6.1.23"/>
    </reaction>
</comment>
<comment type="cofactor">
    <cofactor evidence="1">
        <name>Mg(2+)</name>
        <dbReference type="ChEBI" id="CHEBI:18420"/>
    </cofactor>
</comment>
<comment type="similarity">
    <text evidence="1">Belongs to the dUTPase family.</text>
</comment>
<accession>Q07275</accession>
<accession>Q1HVG9</accession>
<protein>
    <recommendedName>
        <fullName evidence="1">Deoxyuridine 5'-triphosphate nucleotidohydrolase</fullName>
        <shortName evidence="1">dUTPase</shortName>
        <ecNumber evidence="1">3.6.1.23</ecNumber>
    </recommendedName>
    <alternativeName>
        <fullName evidence="1">dUTP pyrophosphatase</fullName>
    </alternativeName>
</protein>
<sequence length="278" mass="30892">MEACPHIRYAFQNDKLLLQQASVGRLTLVNKTTILLRPMKTTTVDLGLYARPPEGHGLMLWGSTSRPVTSHVGIIDPGYTGELRLILQNQRRYNSTLRPSELKIHLAAFRYATPQMEEDKGPINHPQYPGDVGLDVSLPKDLALFPHQTVSVTLTVPPPSIPHHRPTIFGRSGLAMQGILVKPCRWRRGGVDVSLTNFSDQTVFLNKYRRFCQLVYLHKHHLTSFYSPHSDAGVLGPRSLFRWASCAFEEVPGLAMGDSGLSEALEGRQGRGFGSSGQ</sequence>
<proteinExistence type="inferred from homology"/>
<keyword id="KW-0378">Hydrolase</keyword>
<keyword id="KW-0460">Magnesium</keyword>
<keyword id="KW-0479">Metal-binding</keyword>
<keyword id="KW-0546">Nucleotide metabolism</keyword>
<keyword id="KW-1185">Reference proteome</keyword>
<dbReference type="EC" id="3.6.1.23" evidence="1"/>
<dbReference type="EMBL" id="L07923">
    <property type="protein sequence ID" value="AAA02786.1"/>
    <property type="status" value="ALT_SEQ"/>
    <property type="molecule type" value="Genomic_DNA"/>
</dbReference>
<dbReference type="EMBL" id="DQ279927">
    <property type="protein sequence ID" value="ABB89239.1"/>
    <property type="molecule type" value="Genomic_DNA"/>
</dbReference>
<dbReference type="RefSeq" id="YP_001129459.1">
    <property type="nucleotide sequence ID" value="NC_009334.1"/>
</dbReference>
<dbReference type="SMR" id="Q07275"/>
<dbReference type="KEGG" id="vg:5176172"/>
<dbReference type="Proteomes" id="UP000007639">
    <property type="component" value="Genome"/>
</dbReference>
<dbReference type="GO" id="GO:0004170">
    <property type="term" value="F:dUTP diphosphatase activity"/>
    <property type="evidence" value="ECO:0007669"/>
    <property type="project" value="UniProtKB-EC"/>
</dbReference>
<dbReference type="GO" id="GO:0046872">
    <property type="term" value="F:metal ion binding"/>
    <property type="evidence" value="ECO:0007669"/>
    <property type="project" value="UniProtKB-KW"/>
</dbReference>
<dbReference type="GO" id="GO:0046080">
    <property type="term" value="P:dUTP metabolic process"/>
    <property type="evidence" value="ECO:0007669"/>
    <property type="project" value="InterPro"/>
</dbReference>
<dbReference type="CDD" id="cd07557">
    <property type="entry name" value="trimeric_dUTPase"/>
    <property type="match status" value="2"/>
</dbReference>
<dbReference type="Gene3D" id="2.70.40.10">
    <property type="match status" value="2"/>
</dbReference>
<dbReference type="HAMAP" id="MF_04031">
    <property type="entry name" value="HSV_DUT"/>
    <property type="match status" value="1"/>
</dbReference>
<dbReference type="InterPro" id="IPR029054">
    <property type="entry name" value="dUTPase-like"/>
</dbReference>
<dbReference type="InterPro" id="IPR036157">
    <property type="entry name" value="dUTPase-like_sf"/>
</dbReference>
<dbReference type="InterPro" id="IPR033704">
    <property type="entry name" value="dUTPase_trimeric"/>
</dbReference>
<dbReference type="InterPro" id="IPR034745">
    <property type="entry name" value="HSV_DUT"/>
</dbReference>
<dbReference type="Pfam" id="PF00692">
    <property type="entry name" value="dUTPase"/>
    <property type="match status" value="1"/>
</dbReference>
<dbReference type="SUPFAM" id="SSF51283">
    <property type="entry name" value="dUTPase-like"/>
    <property type="match status" value="2"/>
</dbReference>
<organismHost>
    <name type="scientific">Homo sapiens</name>
    <name type="common">Human</name>
    <dbReference type="NCBI Taxonomy" id="9606"/>
</organismHost>
<feature type="chain" id="PRO_0000182963" description="Deoxyuridine 5'-triphosphate nucleotidohydrolase">
    <location>
        <begin position="1"/>
        <end position="278"/>
    </location>
</feature>
<feature type="binding site" evidence="1">
    <location>
        <begin position="171"/>
        <end position="173"/>
    </location>
    <ligand>
        <name>substrate</name>
    </ligand>
</feature>
<feature type="binding site" evidence="1">
    <location>
        <begin position="273"/>
        <end position="274"/>
    </location>
    <ligand>
        <name>substrate</name>
    </ligand>
</feature>
<feature type="sequence conflict" description="In Ref. 1; AAA02786." evidence="2" ref="1">
    <original>S</original>
    <variation>T</variation>
    <location>
        <position position="245"/>
    </location>
</feature>
<name>DUT_EBVA8</name>
<organism>
    <name type="scientific">Epstein-Barr virus (strain AG876)</name>
    <name type="common">HHV-4</name>
    <name type="synonym">Human herpesvirus 4</name>
    <dbReference type="NCBI Taxonomy" id="82830"/>
    <lineage>
        <taxon>Viruses</taxon>
        <taxon>Duplodnaviria</taxon>
        <taxon>Heunggongvirae</taxon>
        <taxon>Peploviricota</taxon>
        <taxon>Herviviricetes</taxon>
        <taxon>Herpesvirales</taxon>
        <taxon>Orthoherpesviridae</taxon>
        <taxon>Gammaherpesvirinae</taxon>
        <taxon>Lymphocryptovirus</taxon>
        <taxon>Lymphocryptovirus humangamma4</taxon>
        <taxon>Epstein-Barr virus (strain GD1)</taxon>
    </lineage>
</organism>
<gene>
    <name evidence="1" type="primary">DUT</name>
    <name type="ORF">BLLF3</name>
</gene>
<reference key="1">
    <citation type="journal article" date="1993" name="Virology">
        <title>The Epstein-Barr virus candidate vaccine antigen gp340/220 is highly conserved between virus types A and B.</title>
        <authorList>
            <person name="Lees J.F."/>
            <person name="Arrand J.E."/>
            <person name="Pepper S.V."/>
            <person name="Stewart J.P."/>
            <person name="Mackett M."/>
            <person name="Arrand J.R."/>
        </authorList>
    </citation>
    <scope>NUCLEOTIDE SEQUENCE [GENOMIC DNA]</scope>
</reference>
<reference key="2">
    <citation type="journal article" date="2006" name="Virology">
        <title>The genome of Epstein-Barr virus type 2 strain AG876.</title>
        <authorList>
            <person name="Dolan A."/>
            <person name="Addison C."/>
            <person name="Gatherer D."/>
            <person name="Davison A.J."/>
            <person name="McGeoch D.J."/>
        </authorList>
    </citation>
    <scope>NUCLEOTIDE SEQUENCE [LARGE SCALE GENOMIC DNA]</scope>
</reference>
<evidence type="ECO:0000255" key="1">
    <source>
        <dbReference type="HAMAP-Rule" id="MF_04031"/>
    </source>
</evidence>
<evidence type="ECO:0000305" key="2"/>